<sequence>MLMSLTDSKEGKNRSGVRMFKDDDFLIPASGESWDRLRLTCSQPFTRHQSFGLAFLRVRSSLDSLSDPVKDPSSPGSSGLNQNSSDKLESDPSPWLTNPSIRRTFFPDPQTSTKEISALKGMLKQLQPGPLGRAARMVLSAAHKAPPASVVSPNNSHGEPDSSHPERAEPRAEEPNRKNNASRGKRRKVQEQRRPLSSSSSQPNRRATGRTKQRQQRPQAKSDGSGVQATGQCPICTGSFSIEALPRHAATCGESSPPQPASPTSLSSSESVLRCLHVALTPVPLIPKPNWTEIVNKKLKFPPTLLRAIQEGQLGLVQQLLESGSDPSGAGPGGPLRNVEESEDRSWREALNLAIRLGHEVITDVLLANVKFDFRQIHEALLVAVDTNQPAVVRRLLARLEREKGRKVDTKSFSLAFFDSSIDGSRFAPGVTPLTLACQKDLYEIAQLLMDQGHTIARPHPVSCACLECSNARRYDLLKFSLSRINTYRGIASRAHLSLASEDAMLAAFQLSRELRRLARKEPEFKPQYIALESLCQDYGFELLGMCRNQSEVTAVLNDLGEDSETEPEAEGLGQAFEEGIPNLARLRLAVNYNQKQFVAHPICQQVLSSIWCGNLAGWRGSTTIWKLFVAFLIFLTMPFLCIGYWLAPKSRLGRLLKIPVLKFLLHSASYLWFLIFLLGESLVMETQLSTFKGRSQSVWETSLHMIWVTGFLWFECKEVWIEGLRSYLLDWWNFLDVVILSLYLASFALRLLLAGLAYMHCRDASDSSTCRYFTTAERSEWRTEDPQFLAEVLFAVTSMLSFTRLAYILPAHESLGTLQISIGKMIDDMIRFMFILMIILTAFLCGLNNIYVPYQETEKLGNFNETFQFLFWTMFGMEEHSVVDMPQFLVPEFVGRAMYGIFTIVMVIVLLNMLIAMITNSFQKIEDDADVEWKFARSKLYLSYFREGLTLPVPFNILPSPKAAFYLLRRIFRFICCGSSCCKAKKSDYPPIPTFTNPGARAGPGEGEHVSYRLRVIKALVQRYIETARREFEETRRKDLGNRLTELTKTVSRLQSEVASVQKTVAAGGALRPPDGASILSRYITRVRNSFQNLGPPAPDTPAELTMPGIVETEVSLEDSLDATGEAGTPASGESSSSSSAHVLVHREQEAEGAGDLPLGEDLETKGES</sequence>
<keyword id="KW-0025">Alternative splicing</keyword>
<keyword id="KW-0040">ANK repeat</keyword>
<keyword id="KW-0106">Calcium</keyword>
<keyword id="KW-0107">Calcium channel</keyword>
<keyword id="KW-0109">Calcium transport</keyword>
<keyword id="KW-0175">Coiled coil</keyword>
<keyword id="KW-0407">Ion channel</keyword>
<keyword id="KW-0406">Ion transport</keyword>
<keyword id="KW-0472">Membrane</keyword>
<keyword id="KW-1185">Reference proteome</keyword>
<keyword id="KW-0677">Repeat</keyword>
<keyword id="KW-0812">Transmembrane</keyword>
<keyword id="KW-1133">Transmembrane helix</keyword>
<keyword id="KW-0813">Transport</keyword>
<proteinExistence type="evidence at transcript level"/>
<organism>
    <name type="scientific">Rattus norvegicus</name>
    <name type="common">Rat</name>
    <dbReference type="NCBI Taxonomy" id="10116"/>
    <lineage>
        <taxon>Eukaryota</taxon>
        <taxon>Metazoa</taxon>
        <taxon>Chordata</taxon>
        <taxon>Craniata</taxon>
        <taxon>Vertebrata</taxon>
        <taxon>Euteleostomi</taxon>
        <taxon>Mammalia</taxon>
        <taxon>Eutheria</taxon>
        <taxon>Euarchontoglires</taxon>
        <taxon>Glires</taxon>
        <taxon>Rodentia</taxon>
        <taxon>Myomorpha</taxon>
        <taxon>Muroidea</taxon>
        <taxon>Muridae</taxon>
        <taxon>Murinae</taxon>
        <taxon>Rattus</taxon>
    </lineage>
</organism>
<evidence type="ECO:0000255" key="1"/>
<evidence type="ECO:0000256" key="2">
    <source>
        <dbReference type="SAM" id="MobiDB-lite"/>
    </source>
</evidence>
<evidence type="ECO:0000303" key="3">
    <source>
    </source>
</evidence>
<evidence type="ECO:0000303" key="4">
    <source>
    </source>
</evidence>
<evidence type="ECO:0000305" key="5"/>
<reference key="1">
    <citation type="journal article" date="1999" name="Proc. Natl. Acad. Sci. U.S.A.">
        <title>TRP2: a candidate transduction channel for mammalian pheromone sensory signaling.</title>
        <authorList>
            <person name="Liman E.R."/>
            <person name="Corey D.P."/>
            <person name="Dulac C."/>
        </authorList>
    </citation>
    <scope>NUCLEOTIDE SEQUENCE [MRNA] (ISOFORM 2)</scope>
</reference>
<reference key="2">
    <citation type="journal article" date="2004" name="Nature">
        <title>Genome sequence of the Brown Norway rat yields insights into mammalian evolution.</title>
        <authorList>
            <person name="Gibbs R.A."/>
            <person name="Weinstock G.M."/>
            <person name="Metzker M.L."/>
            <person name="Muzny D.M."/>
            <person name="Sodergren E.J."/>
            <person name="Scherer S."/>
            <person name="Scott G."/>
            <person name="Steffen D."/>
            <person name="Worley K.C."/>
            <person name="Burch P.E."/>
            <person name="Okwuonu G."/>
            <person name="Hines S."/>
            <person name="Lewis L."/>
            <person name="Deramo C."/>
            <person name="Delgado O."/>
            <person name="Dugan-Rocha S."/>
            <person name="Miner G."/>
            <person name="Morgan M."/>
            <person name="Hawes A."/>
            <person name="Gill R."/>
            <person name="Holt R.A."/>
            <person name="Adams M.D."/>
            <person name="Amanatides P.G."/>
            <person name="Baden-Tillson H."/>
            <person name="Barnstead M."/>
            <person name="Chin S."/>
            <person name="Evans C.A."/>
            <person name="Ferriera S."/>
            <person name="Fosler C."/>
            <person name="Glodek A."/>
            <person name="Gu Z."/>
            <person name="Jennings D."/>
            <person name="Kraft C.L."/>
            <person name="Nguyen T."/>
            <person name="Pfannkoch C.M."/>
            <person name="Sitter C."/>
            <person name="Sutton G.G."/>
            <person name="Venter J.C."/>
            <person name="Woodage T."/>
            <person name="Smith D."/>
            <person name="Lee H.-M."/>
            <person name="Gustafson E."/>
            <person name="Cahill P."/>
            <person name="Kana A."/>
            <person name="Doucette-Stamm L."/>
            <person name="Weinstock K."/>
            <person name="Fechtel K."/>
            <person name="Weiss R.B."/>
            <person name="Dunn D.M."/>
            <person name="Green E.D."/>
            <person name="Blakesley R.W."/>
            <person name="Bouffard G.G."/>
            <person name="De Jong P.J."/>
            <person name="Osoegawa K."/>
            <person name="Zhu B."/>
            <person name="Marra M."/>
            <person name="Schein J."/>
            <person name="Bosdet I."/>
            <person name="Fjell C."/>
            <person name="Jones S."/>
            <person name="Krzywinski M."/>
            <person name="Mathewson C."/>
            <person name="Siddiqui A."/>
            <person name="Wye N."/>
            <person name="McPherson J."/>
            <person name="Zhao S."/>
            <person name="Fraser C.M."/>
            <person name="Shetty J."/>
            <person name="Shatsman S."/>
            <person name="Geer K."/>
            <person name="Chen Y."/>
            <person name="Abramzon S."/>
            <person name="Nierman W.C."/>
            <person name="Havlak P.H."/>
            <person name="Chen R."/>
            <person name="Durbin K.J."/>
            <person name="Egan A."/>
            <person name="Ren Y."/>
            <person name="Song X.-Z."/>
            <person name="Li B."/>
            <person name="Liu Y."/>
            <person name="Qin X."/>
            <person name="Cawley S."/>
            <person name="Cooney A.J."/>
            <person name="D'Souza L.M."/>
            <person name="Martin K."/>
            <person name="Wu J.Q."/>
            <person name="Gonzalez-Garay M.L."/>
            <person name="Jackson A.R."/>
            <person name="Kalafus K.J."/>
            <person name="McLeod M.P."/>
            <person name="Milosavljevic A."/>
            <person name="Virk D."/>
            <person name="Volkov A."/>
            <person name="Wheeler D.A."/>
            <person name="Zhang Z."/>
            <person name="Bailey J.A."/>
            <person name="Eichler E.E."/>
            <person name="Tuzun E."/>
            <person name="Birney E."/>
            <person name="Mongin E."/>
            <person name="Ureta-Vidal A."/>
            <person name="Woodwark C."/>
            <person name="Zdobnov E."/>
            <person name="Bork P."/>
            <person name="Suyama M."/>
            <person name="Torrents D."/>
            <person name="Alexandersson M."/>
            <person name="Trask B.J."/>
            <person name="Young J.M."/>
            <person name="Huang H."/>
            <person name="Wang H."/>
            <person name="Xing H."/>
            <person name="Daniels S."/>
            <person name="Gietzen D."/>
            <person name="Schmidt J."/>
            <person name="Stevens K."/>
            <person name="Vitt U."/>
            <person name="Wingrove J."/>
            <person name="Camara F."/>
            <person name="Mar Alba M."/>
            <person name="Abril J.F."/>
            <person name="Guigo R."/>
            <person name="Smit A."/>
            <person name="Dubchak I."/>
            <person name="Rubin E.M."/>
            <person name="Couronne O."/>
            <person name="Poliakov A."/>
            <person name="Huebner N."/>
            <person name="Ganten D."/>
            <person name="Goesele C."/>
            <person name="Hummel O."/>
            <person name="Kreitler T."/>
            <person name="Lee Y.-A."/>
            <person name="Monti J."/>
            <person name="Schulz H."/>
            <person name="Zimdahl H."/>
            <person name="Himmelbauer H."/>
            <person name="Lehrach H."/>
            <person name="Jacob H.J."/>
            <person name="Bromberg S."/>
            <person name="Gullings-Handley J."/>
            <person name="Jensen-Seaman M.I."/>
            <person name="Kwitek A.E."/>
            <person name="Lazar J."/>
            <person name="Pasko D."/>
            <person name="Tonellato P.J."/>
            <person name="Twigger S."/>
            <person name="Ponting C.P."/>
            <person name="Duarte J.M."/>
            <person name="Rice S."/>
            <person name="Goodstadt L."/>
            <person name="Beatson S.A."/>
            <person name="Emes R.D."/>
            <person name="Winter E.E."/>
            <person name="Webber C."/>
            <person name="Brandt P."/>
            <person name="Nyakatura G."/>
            <person name="Adetobi M."/>
            <person name="Chiaromonte F."/>
            <person name="Elnitski L."/>
            <person name="Eswara P."/>
            <person name="Hardison R.C."/>
            <person name="Hou M."/>
            <person name="Kolbe D."/>
            <person name="Makova K."/>
            <person name="Miller W."/>
            <person name="Nekrutenko A."/>
            <person name="Riemer C."/>
            <person name="Schwartz S."/>
            <person name="Taylor J."/>
            <person name="Yang S."/>
            <person name="Zhang Y."/>
            <person name="Lindpaintner K."/>
            <person name="Andrews T.D."/>
            <person name="Caccamo M."/>
            <person name="Clamp M."/>
            <person name="Clarke L."/>
            <person name="Curwen V."/>
            <person name="Durbin R.M."/>
            <person name="Eyras E."/>
            <person name="Searle S.M."/>
            <person name="Cooper G.M."/>
            <person name="Batzoglou S."/>
            <person name="Brudno M."/>
            <person name="Sidow A."/>
            <person name="Stone E.A."/>
            <person name="Payseur B.A."/>
            <person name="Bourque G."/>
            <person name="Lopez-Otin C."/>
            <person name="Puente X.S."/>
            <person name="Chakrabarti K."/>
            <person name="Chatterji S."/>
            <person name="Dewey C."/>
            <person name="Pachter L."/>
            <person name="Bray N."/>
            <person name="Yap V.B."/>
            <person name="Caspi A."/>
            <person name="Tesler G."/>
            <person name="Pevzner P.A."/>
            <person name="Haussler D."/>
            <person name="Roskin K.M."/>
            <person name="Baertsch R."/>
            <person name="Clawson H."/>
            <person name="Furey T.S."/>
            <person name="Hinrichs A.S."/>
            <person name="Karolchik D."/>
            <person name="Kent W.J."/>
            <person name="Rosenbloom K.R."/>
            <person name="Trumbower H."/>
            <person name="Weirauch M."/>
            <person name="Cooper D.N."/>
            <person name="Stenson P.D."/>
            <person name="Ma B."/>
            <person name="Brent M."/>
            <person name="Arumugam M."/>
            <person name="Shteynberg D."/>
            <person name="Copley R.R."/>
            <person name="Taylor M.S."/>
            <person name="Riethman H."/>
            <person name="Mudunuri U."/>
            <person name="Peterson J."/>
            <person name="Guyer M."/>
            <person name="Felsenfeld A."/>
            <person name="Old S."/>
            <person name="Mockrin S."/>
            <person name="Collins F.S."/>
        </authorList>
    </citation>
    <scope>NUCLEOTIDE SEQUENCE [LARGE SCALE GENOMIC DNA]</scope>
    <source>
        <strain>Brown Norway</strain>
    </source>
</reference>
<reference key="3">
    <citation type="journal article" date="2004" name="Genome Res.">
        <title>The status, quality, and expansion of the NIH full-length cDNA project: the Mammalian Gene Collection (MGC).</title>
        <authorList>
            <consortium name="The MGC Project Team"/>
        </authorList>
    </citation>
    <scope>NUCLEOTIDE SEQUENCE [LARGE SCALE MRNA] (ISOFORM 3)</scope>
    <source>
        <tissue>Embryo</tissue>
    </source>
</reference>
<reference key="4">
    <citation type="submission" date="1998-04" db="EMBL/GenBank/DDBJ databases">
        <title>Expression patterns of mammalian trp homologues in rat excitable cells.</title>
        <authorList>
            <person name="Koizumi S."/>
            <person name="Ripley S.J."/>
            <person name="Bootman M.D."/>
            <person name="Lipp P."/>
            <person name="Berridge M.J."/>
            <person name="Bobanovic L.K."/>
        </authorList>
    </citation>
    <scope>NUCLEOTIDE SEQUENCE [MRNA] OF 867-930 (ISOFORM 1/2)</scope>
    <source>
        <strain>Wistar</strain>
        <tissue>Heart</tissue>
    </source>
</reference>
<accession>Q9R283</accession>
<accession>B5DFD7</accession>
<accession>O70485</accession>
<gene>
    <name type="primary">Trpc2</name>
    <name type="synonym">Trp2</name>
</gene>
<protein>
    <recommendedName>
        <fullName>Short transient receptor potential channel 2</fullName>
        <shortName>TrpC2</shortName>
    </recommendedName>
    <alternativeName>
        <fullName>Transient receptor protein 2</fullName>
        <shortName>TRP-2</shortName>
        <shortName>rTrp2</shortName>
    </alternativeName>
</protein>
<dbReference type="EMBL" id="AF136401">
    <property type="protein sequence ID" value="AAD31453.1"/>
    <property type="molecule type" value="mRNA"/>
</dbReference>
<dbReference type="EMBL" id="AABR03002379">
    <property type="status" value="NOT_ANNOTATED_CDS"/>
    <property type="molecule type" value="Genomic_DNA"/>
</dbReference>
<dbReference type="EMBL" id="AABR03010502">
    <property type="status" value="NOT_ANNOTATED_CDS"/>
    <property type="molecule type" value="Genomic_DNA"/>
</dbReference>
<dbReference type="EMBL" id="AABR03010734">
    <property type="status" value="NOT_ANNOTATED_CDS"/>
    <property type="molecule type" value="Genomic_DNA"/>
</dbReference>
<dbReference type="EMBL" id="AABR03001253">
    <property type="status" value="NOT_ANNOTATED_CDS"/>
    <property type="molecule type" value="Genomic_DNA"/>
</dbReference>
<dbReference type="EMBL" id="BC169022">
    <property type="protein sequence ID" value="AAI69022.1"/>
    <property type="molecule type" value="mRNA"/>
</dbReference>
<dbReference type="EMBL" id="AF061874">
    <property type="protein sequence ID" value="AAC16726.1"/>
    <property type="molecule type" value="mRNA"/>
</dbReference>
<dbReference type="RefSeq" id="NP_001316819.1">
    <molecule id="Q9R283-3"/>
    <property type="nucleotide sequence ID" value="NM_001329890.1"/>
</dbReference>
<dbReference type="RefSeq" id="NP_072160.2">
    <molecule id="Q9R283-2"/>
    <property type="nucleotide sequence ID" value="NM_022638.3"/>
</dbReference>
<dbReference type="RefSeq" id="XP_006223495.1">
    <property type="nucleotide sequence ID" value="XM_006223433.3"/>
</dbReference>
<dbReference type="RefSeq" id="XP_006229966.1">
    <molecule id="Q9R283-3"/>
    <property type="nucleotide sequence ID" value="XM_006229904.3"/>
</dbReference>
<dbReference type="SMR" id="Q9R283"/>
<dbReference type="FunCoup" id="Q9R283">
    <property type="interactions" value="7"/>
</dbReference>
<dbReference type="STRING" id="10116.ENSRNOP00000047354"/>
<dbReference type="GlyGen" id="Q9R283">
    <property type="glycosylation" value="1 site"/>
</dbReference>
<dbReference type="PhosphoSitePlus" id="Q9R283"/>
<dbReference type="PaxDb" id="10116-ENSRNOP00000047354"/>
<dbReference type="Ensembl" id="ENSRNOT00000045726.5">
    <molecule id="Q9R283-2"/>
    <property type="protein sequence ID" value="ENSRNOP00000042378.5"/>
    <property type="gene ID" value="ENSRNOG00000020188.9"/>
</dbReference>
<dbReference type="Ensembl" id="ENSRNOT00000048172.6">
    <molecule id="Q9R283-1"/>
    <property type="protein sequence ID" value="ENSRNOP00000047354.3"/>
    <property type="gene ID" value="ENSRNOG00000020188.9"/>
</dbReference>
<dbReference type="KEGG" id="rno:102549471"/>
<dbReference type="UCSC" id="RGD:628819">
    <molecule id="Q9R283-1"/>
    <property type="organism name" value="rat"/>
</dbReference>
<dbReference type="AGR" id="RGD:628819"/>
<dbReference type="AGR" id="RGD:7692537"/>
<dbReference type="CTD" id="102443350"/>
<dbReference type="RGD" id="628819">
    <property type="gene designation" value="Trpc2"/>
</dbReference>
<dbReference type="eggNOG" id="KOG3609">
    <property type="taxonomic scope" value="Eukaryota"/>
</dbReference>
<dbReference type="GeneTree" id="ENSGT01060000248588"/>
<dbReference type="HOGENOM" id="CLU_005716_2_0_1"/>
<dbReference type="InParanoid" id="Q9R283"/>
<dbReference type="OMA" id="MIDDMMF"/>
<dbReference type="OrthoDB" id="71586at9989"/>
<dbReference type="PhylomeDB" id="Q9R283"/>
<dbReference type="PRO" id="PR:Q9R283"/>
<dbReference type="Proteomes" id="UP000002494">
    <property type="component" value="Chromosome 1"/>
</dbReference>
<dbReference type="Bgee" id="ENSRNOG00000020188">
    <property type="expression patterns" value="Expressed in testis and 16 other cell types or tissues"/>
</dbReference>
<dbReference type="ExpressionAtlas" id="Q9R283">
    <property type="expression patterns" value="baseline and differential"/>
</dbReference>
<dbReference type="GO" id="GO:0034703">
    <property type="term" value="C:cation channel complex"/>
    <property type="evidence" value="ECO:0000318"/>
    <property type="project" value="GO_Central"/>
</dbReference>
<dbReference type="GO" id="GO:0032590">
    <property type="term" value="C:dendrite membrane"/>
    <property type="evidence" value="ECO:0000266"/>
    <property type="project" value="RGD"/>
</dbReference>
<dbReference type="GO" id="GO:0012505">
    <property type="term" value="C:endomembrane system"/>
    <property type="evidence" value="ECO:0000266"/>
    <property type="project" value="RGD"/>
</dbReference>
<dbReference type="GO" id="GO:0005634">
    <property type="term" value="C:nucleus"/>
    <property type="evidence" value="ECO:0007669"/>
    <property type="project" value="InterPro"/>
</dbReference>
<dbReference type="GO" id="GO:0005886">
    <property type="term" value="C:plasma membrane"/>
    <property type="evidence" value="ECO:0000266"/>
    <property type="project" value="RGD"/>
</dbReference>
<dbReference type="GO" id="GO:0003684">
    <property type="term" value="F:damaged DNA binding"/>
    <property type="evidence" value="ECO:0007669"/>
    <property type="project" value="InterPro"/>
</dbReference>
<dbReference type="GO" id="GO:0019992">
    <property type="term" value="F:diacylglycerol binding"/>
    <property type="evidence" value="ECO:0000266"/>
    <property type="project" value="RGD"/>
</dbReference>
<dbReference type="GO" id="GO:0070679">
    <property type="term" value="F:inositol 1,4,5 trisphosphate binding"/>
    <property type="evidence" value="ECO:0000266"/>
    <property type="project" value="RGD"/>
</dbReference>
<dbReference type="GO" id="GO:0015279">
    <property type="term" value="F:store-operated calcium channel activity"/>
    <property type="evidence" value="ECO:0000266"/>
    <property type="project" value="RGD"/>
</dbReference>
<dbReference type="GO" id="GO:0007340">
    <property type="term" value="P:acrosome reaction"/>
    <property type="evidence" value="ECO:0000266"/>
    <property type="project" value="RGD"/>
</dbReference>
<dbReference type="GO" id="GO:0002118">
    <property type="term" value="P:aggressive behavior"/>
    <property type="evidence" value="ECO:0000266"/>
    <property type="project" value="RGD"/>
</dbReference>
<dbReference type="GO" id="GO:0070588">
    <property type="term" value="P:calcium ion transmembrane transport"/>
    <property type="evidence" value="ECO:0000318"/>
    <property type="project" value="GO_Central"/>
</dbReference>
<dbReference type="GO" id="GO:0006816">
    <property type="term" value="P:calcium ion transport"/>
    <property type="evidence" value="ECO:0000266"/>
    <property type="project" value="RGD"/>
</dbReference>
<dbReference type="GO" id="GO:0008050">
    <property type="term" value="P:female courtship behavior"/>
    <property type="evidence" value="ECO:0000266"/>
    <property type="project" value="RGD"/>
</dbReference>
<dbReference type="GO" id="GO:0002121">
    <property type="term" value="P:inter-male aggressive behavior"/>
    <property type="evidence" value="ECO:0000266"/>
    <property type="project" value="RGD"/>
</dbReference>
<dbReference type="GO" id="GO:0048047">
    <property type="term" value="P:mating behavior, sex discrimination"/>
    <property type="evidence" value="ECO:0000266"/>
    <property type="project" value="RGD"/>
</dbReference>
<dbReference type="GO" id="GO:1902436">
    <property type="term" value="P:negative regulation of male mating behavior"/>
    <property type="evidence" value="ECO:0000266"/>
    <property type="project" value="RGD"/>
</dbReference>
<dbReference type="GO" id="GO:0007204">
    <property type="term" value="P:positive regulation of cytosolic calcium ion concentration"/>
    <property type="evidence" value="ECO:0000266"/>
    <property type="project" value="RGD"/>
</dbReference>
<dbReference type="GO" id="GO:0051480">
    <property type="term" value="P:regulation of cytosolic calcium ion concentration"/>
    <property type="evidence" value="ECO:0000318"/>
    <property type="project" value="GO_Central"/>
</dbReference>
<dbReference type="GO" id="GO:0010468">
    <property type="term" value="P:regulation of gene expression"/>
    <property type="evidence" value="ECO:0000266"/>
    <property type="project" value="RGD"/>
</dbReference>
<dbReference type="GO" id="GO:0019236">
    <property type="term" value="P:response to pheromone"/>
    <property type="evidence" value="ECO:0000266"/>
    <property type="project" value="RGD"/>
</dbReference>
<dbReference type="GO" id="GO:0007338">
    <property type="term" value="P:single fertilization"/>
    <property type="evidence" value="ECO:0000318"/>
    <property type="project" value="GO_Central"/>
</dbReference>
<dbReference type="GO" id="GO:0000012">
    <property type="term" value="P:single strand break repair"/>
    <property type="evidence" value="ECO:0007669"/>
    <property type="project" value="InterPro"/>
</dbReference>
<dbReference type="GO" id="GO:0002124">
    <property type="term" value="P:territorial aggressive behavior"/>
    <property type="evidence" value="ECO:0000266"/>
    <property type="project" value="RGD"/>
</dbReference>
<dbReference type="FunFam" id="1.25.40.20:FF:000222">
    <property type="entry name" value="Short transient receptor potential channel 2 homolog"/>
    <property type="match status" value="1"/>
</dbReference>
<dbReference type="FunFam" id="2.60.120.260:FF:000167">
    <property type="entry name" value="Transient receptor potential cation channel subfamily C member 2 (pseudogene)"/>
    <property type="match status" value="1"/>
</dbReference>
<dbReference type="Gene3D" id="1.25.40.20">
    <property type="entry name" value="Ankyrin repeat-containing domain"/>
    <property type="match status" value="1"/>
</dbReference>
<dbReference type="Gene3D" id="2.60.120.260">
    <property type="entry name" value="Galactose-binding domain-like"/>
    <property type="match status" value="1"/>
</dbReference>
<dbReference type="InterPro" id="IPR036770">
    <property type="entry name" value="Ankyrin_rpt-contain_sf"/>
</dbReference>
<dbReference type="InterPro" id="IPR008979">
    <property type="entry name" value="Galactose-bd-like_sf"/>
</dbReference>
<dbReference type="InterPro" id="IPR005821">
    <property type="entry name" value="Ion_trans_dom"/>
</dbReference>
<dbReference type="InterPro" id="IPR013555">
    <property type="entry name" value="TRP_dom"/>
</dbReference>
<dbReference type="InterPro" id="IPR005458">
    <property type="entry name" value="TRPC2_channel"/>
</dbReference>
<dbReference type="InterPro" id="IPR002153">
    <property type="entry name" value="TRPC_channel"/>
</dbReference>
<dbReference type="InterPro" id="IPR002706">
    <property type="entry name" value="Xrcc1_N"/>
</dbReference>
<dbReference type="PANTHER" id="PTHR10117:SF6">
    <property type="entry name" value="SHORT TRANSIENT RECEPTOR POTENTIAL CHANNEL 2"/>
    <property type="match status" value="1"/>
</dbReference>
<dbReference type="PANTHER" id="PTHR10117">
    <property type="entry name" value="TRANSIENT RECEPTOR POTENTIAL CHANNEL"/>
    <property type="match status" value="1"/>
</dbReference>
<dbReference type="Pfam" id="PF00520">
    <property type="entry name" value="Ion_trans"/>
    <property type="match status" value="1"/>
</dbReference>
<dbReference type="Pfam" id="PF08344">
    <property type="entry name" value="TRP_2"/>
    <property type="match status" value="1"/>
</dbReference>
<dbReference type="Pfam" id="PF01834">
    <property type="entry name" value="XRCC1_N"/>
    <property type="match status" value="1"/>
</dbReference>
<dbReference type="PRINTS" id="PR01097">
    <property type="entry name" value="TRNSRECEPTRP"/>
</dbReference>
<dbReference type="PRINTS" id="PR01643">
    <property type="entry name" value="TRPCHANNEL2"/>
</dbReference>
<dbReference type="SMART" id="SM01420">
    <property type="entry name" value="TRP_2"/>
    <property type="match status" value="1"/>
</dbReference>
<dbReference type="SUPFAM" id="SSF48403">
    <property type="entry name" value="Ankyrin repeat"/>
    <property type="match status" value="1"/>
</dbReference>
<dbReference type="SUPFAM" id="SSF49785">
    <property type="entry name" value="Galactose-binding domain-like"/>
    <property type="match status" value="1"/>
</dbReference>
<name>TRPC2_RAT</name>
<feature type="chain" id="PRO_0000215308" description="Short transient receptor potential channel 2">
    <location>
        <begin position="1"/>
        <end position="1170"/>
    </location>
</feature>
<feature type="topological domain" description="Cytoplasmic" evidence="1">
    <location>
        <begin position="1"/>
        <end position="627"/>
    </location>
</feature>
<feature type="transmembrane region" description="Helical" evidence="1">
    <location>
        <begin position="628"/>
        <end position="648"/>
    </location>
</feature>
<feature type="topological domain" description="Extracellular" evidence="1">
    <location>
        <begin position="649"/>
        <end position="658"/>
    </location>
</feature>
<feature type="transmembrane region" description="Helical" evidence="1">
    <location>
        <begin position="659"/>
        <end position="679"/>
    </location>
</feature>
<feature type="topological domain" description="Cytoplasmic" evidence="1">
    <location>
        <begin position="680"/>
        <end position="701"/>
    </location>
</feature>
<feature type="transmembrane region" description="Helical" evidence="1">
    <location>
        <begin position="702"/>
        <end position="722"/>
    </location>
</feature>
<feature type="topological domain" description="Extracellular" evidence="1">
    <location>
        <begin position="723"/>
        <end position="737"/>
    </location>
</feature>
<feature type="transmembrane region" description="Helical" evidence="1">
    <location>
        <begin position="738"/>
        <end position="758"/>
    </location>
</feature>
<feature type="topological domain" description="Cytoplasmic" evidence="1">
    <location>
        <begin position="759"/>
        <end position="788"/>
    </location>
</feature>
<feature type="transmembrane region" description="Helical" evidence="1">
    <location>
        <begin position="789"/>
        <end position="809"/>
    </location>
</feature>
<feature type="topological domain" description="Extracellular" evidence="1">
    <location>
        <begin position="810"/>
        <end position="832"/>
    </location>
</feature>
<feature type="transmembrane region" description="Helical" evidence="1">
    <location>
        <begin position="833"/>
        <end position="853"/>
    </location>
</feature>
<feature type="topological domain" description="Cytoplasmic" evidence="1">
    <location>
        <begin position="854"/>
        <end position="898"/>
    </location>
</feature>
<feature type="transmembrane region" description="Helical" evidence="1">
    <location>
        <begin position="899"/>
        <end position="919"/>
    </location>
</feature>
<feature type="topological domain" description="Extracellular" evidence="1">
    <location>
        <begin position="920"/>
        <end position="1170"/>
    </location>
</feature>
<feature type="repeat" description="ANK 1">
    <location>
        <begin position="300"/>
        <end position="329"/>
    </location>
</feature>
<feature type="repeat" description="ANK 2">
    <location>
        <begin position="346"/>
        <end position="376"/>
    </location>
</feature>
<feature type="repeat" description="ANK 3">
    <location>
        <begin position="377"/>
        <end position="405"/>
    </location>
</feature>
<feature type="repeat" description="ANK 4">
    <location>
        <begin position="429"/>
        <end position="458"/>
    </location>
</feature>
<feature type="region of interest" description="Disordered" evidence="2">
    <location>
        <begin position="64"/>
        <end position="113"/>
    </location>
</feature>
<feature type="region of interest" description="Disordered" evidence="2">
    <location>
        <begin position="142"/>
        <end position="231"/>
    </location>
</feature>
<feature type="region of interest" description="Disordered" evidence="2">
    <location>
        <begin position="322"/>
        <end position="342"/>
    </location>
</feature>
<feature type="region of interest" description="Disordered" evidence="2">
    <location>
        <begin position="1118"/>
        <end position="1170"/>
    </location>
</feature>
<feature type="coiled-coil region" evidence="1">
    <location>
        <begin position="1030"/>
        <end position="1068"/>
    </location>
</feature>
<feature type="compositionally biased region" description="Polar residues" evidence="2">
    <location>
        <begin position="74"/>
        <end position="85"/>
    </location>
</feature>
<feature type="compositionally biased region" description="Basic and acidic residues" evidence="2">
    <location>
        <begin position="158"/>
        <end position="177"/>
    </location>
</feature>
<feature type="splice variant" id="VSP_037236" description="In isoform 2." evidence="3">
    <location>
        <begin position="1"/>
        <end position="283"/>
    </location>
</feature>
<feature type="splice variant" id="VSP_038807" description="In isoform 3." evidence="4">
    <original>M</original>
    <variation>MAPVKISHVVSFSSQDPKYPVENLLNPDSHKGPWLSCPRDKTGQLKVEFQLERAVPISYIDVGNCGCAFLQIDVGRSSWPLDRPFVTLLPATM</variation>
    <location>
        <position position="1"/>
    </location>
</feature>
<feature type="splice variant" id="VSP_037238" description="In isoform 3." evidence="4">
    <original>RCLHVALTPVPLIPKPNWTEIVNKKLKFPPTLLRAIQEGQLG</original>
    <variation>WVSSPESSPPPSSWVQCPICELQFSAREIEEHASVCGEVFPA</variation>
    <location>
        <begin position="274"/>
        <end position="315"/>
    </location>
</feature>
<feature type="splice variant" id="VSP_037237" description="In isoform 2." evidence="3">
    <original>PLIPK</original>
    <variation>MDPLS</variation>
    <location>
        <begin position="284"/>
        <end position="288"/>
    </location>
</feature>
<feature type="splice variant" id="VSP_037239" description="In isoform 3." evidence="4">
    <location>
        <begin position="316"/>
        <end position="1170"/>
    </location>
</feature>
<feature type="sequence conflict" description="In Ref. 1; AAD31453." evidence="5" ref="1">
    <original>H</original>
    <variation>R</variation>
    <location>
        <position position="1010"/>
    </location>
</feature>
<feature type="sequence conflict" description="In Ref. 1; AAD31453." evidence="5" ref="1">
    <location>
        <begin position="1069"/>
        <end position="1070"/>
    </location>
</feature>
<comment type="function">
    <text>Thought to form a receptor-activated calcium permeant cation channel. Probably is operated by a phosphatidylinositol second messenger system activated by receptor tyrosine kinases or G-protein coupled receptors. Is not activated by intracellular calcium store depletion.</text>
</comment>
<comment type="subcellular location">
    <subcellularLocation>
        <location evidence="5">Membrane</location>
        <topology evidence="5">Multi-pass membrane protein</topology>
    </subcellularLocation>
</comment>
<comment type="alternative products">
    <event type="alternative splicing"/>
    <isoform>
        <id>Q9R283-1</id>
        <name>1</name>
        <sequence type="displayed"/>
    </isoform>
    <isoform>
        <id>Q9R283-2</id>
        <name>2</name>
        <sequence type="described" ref="VSP_037236 VSP_037237"/>
    </isoform>
    <isoform>
        <id>Q9R283-3</id>
        <name>3</name>
        <sequence type="described" ref="VSP_038807 VSP_037238 VSP_037239"/>
    </isoform>
</comment>
<comment type="tissue specificity">
    <text>Expressed exclusively in vomeronasal organ neurons (sensory microvilli).</text>
</comment>
<comment type="miscellaneous">
    <molecule>Isoform 1</molecule>
    <text>Inferred from mouse sequence.</text>
</comment>
<comment type="similarity">
    <text evidence="5">Belongs to the transient receptor (TC 1.A.4) family. STrpC subfamily. TRPC2 sub-subfamily.</text>
</comment>